<protein>
    <recommendedName>
        <fullName evidence="1">UvrABC system protein B</fullName>
        <shortName evidence="1">Protein UvrB</shortName>
    </recommendedName>
    <alternativeName>
        <fullName evidence="1">Excinuclease ABC subunit B</fullName>
    </alternativeName>
</protein>
<evidence type="ECO:0000255" key="1">
    <source>
        <dbReference type="HAMAP-Rule" id="MF_00204"/>
    </source>
</evidence>
<feature type="chain" id="PRO_1000077874" description="UvrABC system protein B">
    <location>
        <begin position="1"/>
        <end position="673"/>
    </location>
</feature>
<feature type="domain" description="Helicase ATP-binding" evidence="1">
    <location>
        <begin position="26"/>
        <end position="183"/>
    </location>
</feature>
<feature type="domain" description="Helicase C-terminal" evidence="1">
    <location>
        <begin position="431"/>
        <end position="597"/>
    </location>
</feature>
<feature type="domain" description="UVR" evidence="1">
    <location>
        <begin position="633"/>
        <end position="668"/>
    </location>
</feature>
<feature type="short sequence motif" description="Beta-hairpin">
    <location>
        <begin position="92"/>
        <end position="115"/>
    </location>
</feature>
<feature type="binding site" evidence="1">
    <location>
        <begin position="39"/>
        <end position="46"/>
    </location>
    <ligand>
        <name>ATP</name>
        <dbReference type="ChEBI" id="CHEBI:30616"/>
    </ligand>
</feature>
<organism>
    <name type="scientific">Citrobacter koseri (strain ATCC BAA-895 / CDC 4225-83 / SGSC4696)</name>
    <dbReference type="NCBI Taxonomy" id="290338"/>
    <lineage>
        <taxon>Bacteria</taxon>
        <taxon>Pseudomonadati</taxon>
        <taxon>Pseudomonadota</taxon>
        <taxon>Gammaproteobacteria</taxon>
        <taxon>Enterobacterales</taxon>
        <taxon>Enterobacteriaceae</taxon>
        <taxon>Citrobacter</taxon>
    </lineage>
</organism>
<proteinExistence type="inferred from homology"/>
<gene>
    <name evidence="1" type="primary">uvrB</name>
    <name type="ordered locus">CKO_02348</name>
</gene>
<dbReference type="EMBL" id="CP000822">
    <property type="protein sequence ID" value="ABV13470.1"/>
    <property type="molecule type" value="Genomic_DNA"/>
</dbReference>
<dbReference type="RefSeq" id="WP_012133197.1">
    <property type="nucleotide sequence ID" value="NC_009792.1"/>
</dbReference>
<dbReference type="SMR" id="A8AJ07"/>
<dbReference type="STRING" id="290338.CKO_02348"/>
<dbReference type="GeneID" id="45136252"/>
<dbReference type="KEGG" id="cko:CKO_02348"/>
<dbReference type="HOGENOM" id="CLU_009621_2_1_6"/>
<dbReference type="OrthoDB" id="9806651at2"/>
<dbReference type="Proteomes" id="UP000008148">
    <property type="component" value="Chromosome"/>
</dbReference>
<dbReference type="GO" id="GO:0005737">
    <property type="term" value="C:cytoplasm"/>
    <property type="evidence" value="ECO:0007669"/>
    <property type="project" value="UniProtKB-SubCell"/>
</dbReference>
<dbReference type="GO" id="GO:0009380">
    <property type="term" value="C:excinuclease repair complex"/>
    <property type="evidence" value="ECO:0007669"/>
    <property type="project" value="InterPro"/>
</dbReference>
<dbReference type="GO" id="GO:0005524">
    <property type="term" value="F:ATP binding"/>
    <property type="evidence" value="ECO:0007669"/>
    <property type="project" value="UniProtKB-UniRule"/>
</dbReference>
<dbReference type="GO" id="GO:0016887">
    <property type="term" value="F:ATP hydrolysis activity"/>
    <property type="evidence" value="ECO:0007669"/>
    <property type="project" value="InterPro"/>
</dbReference>
<dbReference type="GO" id="GO:0003677">
    <property type="term" value="F:DNA binding"/>
    <property type="evidence" value="ECO:0007669"/>
    <property type="project" value="UniProtKB-UniRule"/>
</dbReference>
<dbReference type="GO" id="GO:0009381">
    <property type="term" value="F:excinuclease ABC activity"/>
    <property type="evidence" value="ECO:0007669"/>
    <property type="project" value="UniProtKB-UniRule"/>
</dbReference>
<dbReference type="GO" id="GO:0004386">
    <property type="term" value="F:helicase activity"/>
    <property type="evidence" value="ECO:0007669"/>
    <property type="project" value="UniProtKB-KW"/>
</dbReference>
<dbReference type="GO" id="GO:0006289">
    <property type="term" value="P:nucleotide-excision repair"/>
    <property type="evidence" value="ECO:0007669"/>
    <property type="project" value="UniProtKB-UniRule"/>
</dbReference>
<dbReference type="GO" id="GO:0009432">
    <property type="term" value="P:SOS response"/>
    <property type="evidence" value="ECO:0007669"/>
    <property type="project" value="UniProtKB-UniRule"/>
</dbReference>
<dbReference type="CDD" id="cd17916">
    <property type="entry name" value="DEXHc_UvrB"/>
    <property type="match status" value="1"/>
</dbReference>
<dbReference type="CDD" id="cd18790">
    <property type="entry name" value="SF2_C_UvrB"/>
    <property type="match status" value="1"/>
</dbReference>
<dbReference type="FunFam" id="3.40.50.300:FF:000257">
    <property type="entry name" value="UvrABC system protein B"/>
    <property type="match status" value="1"/>
</dbReference>
<dbReference type="FunFam" id="3.40.50.300:FF:000401">
    <property type="entry name" value="UvrABC system protein B"/>
    <property type="match status" value="1"/>
</dbReference>
<dbReference type="FunFam" id="3.40.50.300:FF:000477">
    <property type="entry name" value="UvrABC system protein B"/>
    <property type="match status" value="1"/>
</dbReference>
<dbReference type="Gene3D" id="3.40.50.300">
    <property type="entry name" value="P-loop containing nucleotide triphosphate hydrolases"/>
    <property type="match status" value="3"/>
</dbReference>
<dbReference type="Gene3D" id="4.10.860.10">
    <property type="entry name" value="UVR domain"/>
    <property type="match status" value="1"/>
</dbReference>
<dbReference type="HAMAP" id="MF_00204">
    <property type="entry name" value="UvrB"/>
    <property type="match status" value="1"/>
</dbReference>
<dbReference type="InterPro" id="IPR006935">
    <property type="entry name" value="Helicase/UvrB_N"/>
</dbReference>
<dbReference type="InterPro" id="IPR014001">
    <property type="entry name" value="Helicase_ATP-bd"/>
</dbReference>
<dbReference type="InterPro" id="IPR001650">
    <property type="entry name" value="Helicase_C-like"/>
</dbReference>
<dbReference type="InterPro" id="IPR027417">
    <property type="entry name" value="P-loop_NTPase"/>
</dbReference>
<dbReference type="InterPro" id="IPR001943">
    <property type="entry name" value="UVR_dom"/>
</dbReference>
<dbReference type="InterPro" id="IPR036876">
    <property type="entry name" value="UVR_dom_sf"/>
</dbReference>
<dbReference type="InterPro" id="IPR004807">
    <property type="entry name" value="UvrB"/>
</dbReference>
<dbReference type="InterPro" id="IPR041471">
    <property type="entry name" value="UvrB_inter"/>
</dbReference>
<dbReference type="InterPro" id="IPR024759">
    <property type="entry name" value="UvrB_YAD/RRR_dom"/>
</dbReference>
<dbReference type="NCBIfam" id="NF003673">
    <property type="entry name" value="PRK05298.1"/>
    <property type="match status" value="1"/>
</dbReference>
<dbReference type="NCBIfam" id="TIGR00631">
    <property type="entry name" value="uvrb"/>
    <property type="match status" value="1"/>
</dbReference>
<dbReference type="PANTHER" id="PTHR24029">
    <property type="entry name" value="UVRABC SYSTEM PROTEIN B"/>
    <property type="match status" value="1"/>
</dbReference>
<dbReference type="PANTHER" id="PTHR24029:SF0">
    <property type="entry name" value="UVRABC SYSTEM PROTEIN B"/>
    <property type="match status" value="1"/>
</dbReference>
<dbReference type="Pfam" id="PF00271">
    <property type="entry name" value="Helicase_C"/>
    <property type="match status" value="1"/>
</dbReference>
<dbReference type="Pfam" id="PF04851">
    <property type="entry name" value="ResIII"/>
    <property type="match status" value="1"/>
</dbReference>
<dbReference type="Pfam" id="PF02151">
    <property type="entry name" value="UVR"/>
    <property type="match status" value="1"/>
</dbReference>
<dbReference type="Pfam" id="PF12344">
    <property type="entry name" value="UvrB"/>
    <property type="match status" value="1"/>
</dbReference>
<dbReference type="Pfam" id="PF17757">
    <property type="entry name" value="UvrB_inter"/>
    <property type="match status" value="1"/>
</dbReference>
<dbReference type="SMART" id="SM00487">
    <property type="entry name" value="DEXDc"/>
    <property type="match status" value="1"/>
</dbReference>
<dbReference type="SMART" id="SM00490">
    <property type="entry name" value="HELICc"/>
    <property type="match status" value="1"/>
</dbReference>
<dbReference type="SUPFAM" id="SSF46600">
    <property type="entry name" value="C-terminal UvrC-binding domain of UvrB"/>
    <property type="match status" value="1"/>
</dbReference>
<dbReference type="SUPFAM" id="SSF52540">
    <property type="entry name" value="P-loop containing nucleoside triphosphate hydrolases"/>
    <property type="match status" value="2"/>
</dbReference>
<dbReference type="PROSITE" id="PS51192">
    <property type="entry name" value="HELICASE_ATP_BIND_1"/>
    <property type="match status" value="1"/>
</dbReference>
<dbReference type="PROSITE" id="PS51194">
    <property type="entry name" value="HELICASE_CTER"/>
    <property type="match status" value="1"/>
</dbReference>
<dbReference type="PROSITE" id="PS50151">
    <property type="entry name" value="UVR"/>
    <property type="match status" value="1"/>
</dbReference>
<reference key="1">
    <citation type="submission" date="2007-08" db="EMBL/GenBank/DDBJ databases">
        <authorList>
            <consortium name="The Citrobacter koseri Genome Sequencing Project"/>
            <person name="McClelland M."/>
            <person name="Sanderson E.K."/>
            <person name="Porwollik S."/>
            <person name="Spieth J."/>
            <person name="Clifton W.S."/>
            <person name="Latreille P."/>
            <person name="Courtney L."/>
            <person name="Wang C."/>
            <person name="Pepin K."/>
            <person name="Bhonagiri V."/>
            <person name="Nash W."/>
            <person name="Johnson M."/>
            <person name="Thiruvilangam P."/>
            <person name="Wilson R."/>
        </authorList>
    </citation>
    <scope>NUCLEOTIDE SEQUENCE [LARGE SCALE GENOMIC DNA]</scope>
    <source>
        <strain>ATCC BAA-895 / CDC 4225-83 / SGSC4696</strain>
    </source>
</reference>
<sequence length="673" mass="76256">MSKPFKLNSAFKPSGDQPEAIRRLEEGLEDGLAHQTLLGVTGSGKTFTIANVIADLQRPTMVLAPNKTLAAQLYGEMKEFFPDNAVEYFVSYYDYYQPEAYVPSSDTFIEKDASVNEHIEQMRLSATKALLERRDVVVVASVSAIYGLGDPDLYLKMMLHLTVGMIIDQRAILRRLAELQYTRNDQAFQRGTFRVRGEVIDIFPAESDDIALRVELFDEEVERLSLFDPLTGQVESTIQRYTIYPKTHYVTPRERIVQAMEEIKDELVDRRRIMQENNKLLEEQRLTQRTQFDLEMMNELGYCSGIENYSRYLSGRGPGEPPPTLFDYLPADGLLVVDESHVTIPQIGGMFRGDRARKETLVEYGFRLPSALDNRPLKFEEFEALAPQTIYVSATPGNYELEKSGGEVVDQVVRPTGLLDPIIEVRPVATQVDDLLSEIRLRAAINERVLVTTLTKRMAEDLTEYLEEHGERVRYLHSDIDTVERMEIIRDLRLGEFDVLVGINLLREGLDMPEVSLVAILDADKEGFLRSERSLIQTIGRAARNVNGKAILYGDKITPSMAKAIGETERRREKQQLYNEEHGIVPQGLNKKVVDILALGQNIAKTKAKGKGKSRAAAKSGVVEMDMTPKALQQKIHELEGQMMQHAQNLEFEEAAEIRDQLHQLRELFIAAS</sequence>
<keyword id="KW-0067">ATP-binding</keyword>
<keyword id="KW-0963">Cytoplasm</keyword>
<keyword id="KW-0227">DNA damage</keyword>
<keyword id="KW-0228">DNA excision</keyword>
<keyword id="KW-0234">DNA repair</keyword>
<keyword id="KW-0267">Excision nuclease</keyword>
<keyword id="KW-0347">Helicase</keyword>
<keyword id="KW-0378">Hydrolase</keyword>
<keyword id="KW-0547">Nucleotide-binding</keyword>
<keyword id="KW-1185">Reference proteome</keyword>
<keyword id="KW-0742">SOS response</keyword>
<comment type="function">
    <text evidence="1">The UvrABC repair system catalyzes the recognition and processing of DNA lesions. A damage recognition complex composed of 2 UvrA and 2 UvrB subunits scans DNA for abnormalities. Upon binding of the UvrA(2)B(2) complex to a putative damaged site, the DNA wraps around one UvrB monomer. DNA wrap is dependent on ATP binding by UvrB and probably causes local melting of the DNA helix, facilitating insertion of UvrB beta-hairpin between the DNA strands. Then UvrB probes one DNA strand for the presence of a lesion. If a lesion is found the UvrA subunits dissociate and the UvrB-DNA preincision complex is formed. This complex is subsequently bound by UvrC and the second UvrB is released. If no lesion is found, the DNA wraps around the other UvrB subunit that will check the other stand for damage.</text>
</comment>
<comment type="subunit">
    <text evidence="1">Forms a heterotetramer with UvrA during the search for lesions. Interacts with UvrC in an incision complex.</text>
</comment>
<comment type="subcellular location">
    <subcellularLocation>
        <location evidence="1">Cytoplasm</location>
    </subcellularLocation>
</comment>
<comment type="domain">
    <text evidence="1">The beta-hairpin motif is involved in DNA binding.</text>
</comment>
<comment type="similarity">
    <text evidence="1">Belongs to the UvrB family.</text>
</comment>
<accession>A8AJ07</accession>
<name>UVRB_CITK8</name>